<comment type="function">
    <text evidence="2">Integral membrane glycoprotein that plays an essential role in the immune response and serves multiple functions in responses against both external and internal offenses. In T-cells, functions primarily as a coreceptor for MHC class II molecule:peptide complex. The antigens presented by class II peptides are derived from extracellular proteins while class I peptides are derived from cytosolic proteins. Interacts simultaneously with the T-cell receptor (TCR) and the MHC class II presented by antigen presenting cells (APCs). In turn, recruits the Src kinase LCK to the vicinity of the TCR-CD3 complex. LCK then initiates different intracellular signaling pathways by phosphorylating various substrates ultimately leading to lymphokine production, motility, adhesion and activation of T-helper cells. In other cells such as macrophages or NK cells, plays a role in differentiation/activation, cytokine expression and cell migration in a TCR/LCK-independent pathway. Participates in the development of T-helper cells in the thymus and triggers the differentiation of monocytes into functional mature macrophages.</text>
</comment>
<comment type="subunit">
    <text evidence="2">Forms disulfide-linked homodimers at the cell surface. Interacts with LCK. Interacts with PTK2/FAK1. Binds to P4HB/PDI. Interacts with IL16; this interaction induces a CD4-dependent signaling in lymphocytes. Interacts (via Ig-like V-type domain) with MHCII alpha chain (via alpha-2 domain) and beta chain (via beta-2 domain); this interaction increases the affinity of TCR for peptide-MHCII. CD4 oligomerization via Ig-like C2-type 2 and 3 domains appears to be required for stable binding to MHCII and adhesion between T cells and APCs.</text>
</comment>
<comment type="subcellular location">
    <subcellularLocation>
        <location evidence="2">Cell membrane</location>
        <topology evidence="2">Single-pass type I membrane protein</topology>
    </subcellularLocation>
    <text evidence="2">Localizes to lipid rafts.</text>
</comment>
<comment type="domain">
    <text evidence="2">The Ig-like V-type domain mediates the interaction with MHCII.</text>
</comment>
<comment type="PTM">
    <text evidence="2">Palmitoylation and association with LCK contribute to the enrichment of CD4 in lipid rafts.</text>
</comment>
<comment type="PTM">
    <text evidence="2">Phosphorylated by PKC; phosphorylation plays an important role for CD4 internalization.</text>
</comment>
<reference key="1">
    <citation type="journal article" date="1990" name="Cell">
        <title>A CD4 domain important for HIV-mediated syncytium formation lies outside the virus binding site.</title>
        <authorList>
            <person name="Camerini D."/>
            <person name="Seed B."/>
        </authorList>
    </citation>
    <scope>NUCLEOTIDE SEQUENCE</scope>
</reference>
<reference key="2">
    <citation type="submission" date="1995-06" db="EMBL/GenBank/DDBJ databases">
        <title>Molecular cloning and expression of macaque CD4s.</title>
        <authorList>
            <person name="Hashimoto O."/>
            <person name="Tatsumi M."/>
        </authorList>
    </citation>
    <scope>NUCLEOTIDE SEQUENCE [GENOMIC DNA]</scope>
    <source>
        <tissue>Thymocyte</tissue>
    </source>
</reference>
<reference key="3">
    <citation type="journal article" date="1992" name="Eur. J. Immunol.">
        <title>Cloning and sequences of primate CD4 molecules: diversity of the cellular receptor for simian immunodeficiency virus/human immunodeficiency virus.</title>
        <authorList>
            <person name="Fomsgaard A."/>
            <person name="Hirsch V.M."/>
            <person name="Johnson P.R."/>
        </authorList>
    </citation>
    <scope>NUCLEOTIDE SEQUENCE [GENOMIC DNA] OF 28-424</scope>
    <source>
        <tissue>Blood</tissue>
    </source>
</reference>
<reference key="4">
    <citation type="journal article" date="1998" name="Mol. Biol. Evol.">
        <title>Nuclear gene trees and the phylogenetic relationships of the mangabeys (Primates: Papionini).</title>
        <authorList>
            <person name="Harris E.E."/>
            <person name="Disotell T.R."/>
        </authorList>
    </citation>
    <scope>NUCLEOTIDE SEQUENCE [GENOMIC DNA] OF 107-192</scope>
</reference>
<evidence type="ECO:0000250" key="1"/>
<evidence type="ECO:0000250" key="2">
    <source>
        <dbReference type="UniProtKB" id="P01730"/>
    </source>
</evidence>
<evidence type="ECO:0000255" key="3"/>
<evidence type="ECO:0000255" key="4">
    <source>
        <dbReference type="PROSITE-ProRule" id="PRU00114"/>
    </source>
</evidence>
<evidence type="ECO:0000305" key="5"/>
<evidence type="ECO:0007829" key="6">
    <source>
        <dbReference type="PDB" id="6TYB"/>
    </source>
</evidence>
<sequence length="458" mass="50884">MNRGIPFRHLLLVLQLALLPAVTQGKKVVLGKKGDTVELTCNASQKKNTQFHWKNSNQIKILGIQGLFLTKGPSKLSDRADSRKSLWDQGCFSMIIKNLKIEDSDTYICEVENKKEEVELLVFGLTANSDTHLLEGQSLTLTLESPPGSSPSVKCRSPGGKNIQGGRTISVPQLERQDSGTWTCTVSQDQKTVEFKIDIVVLAFQKASSTVYKKEGEQVEFSFPLAFTLEKLTGSGELWWQAERASSSKSWITFDLKNKEVSVKRVTQDPKLQMGKKLPLHLTLPQALPQYAGSGNLTLALEAKTGKLHQEVNLVVMRATQFQENLTCEVWGPTSPKLTLSLKLENKGATVSKQAKAVWVLNPEAGMWQCLLSDSGQVLLESNIKVVPTWPTPVQPMALIVLGGVAGLLLFTGLGIFFCVRCRHRRRQAERMSQIKRLLSEKKTCQCPHRFQKTCSPI</sequence>
<proteinExistence type="evidence at protein level"/>
<keyword id="KW-0002">3D-structure</keyword>
<keyword id="KW-1064">Adaptive immunity</keyword>
<keyword id="KW-1003">Cell membrane</keyword>
<keyword id="KW-1015">Disulfide bond</keyword>
<keyword id="KW-0325">Glycoprotein</keyword>
<keyword id="KW-0391">Immunity</keyword>
<keyword id="KW-0393">Immunoglobulin domain</keyword>
<keyword id="KW-0449">Lipoprotein</keyword>
<keyword id="KW-0472">Membrane</keyword>
<keyword id="KW-0564">Palmitate</keyword>
<keyword id="KW-0597">Phosphoprotein</keyword>
<keyword id="KW-1185">Reference proteome</keyword>
<keyword id="KW-0677">Repeat</keyword>
<keyword id="KW-0732">Signal</keyword>
<keyword id="KW-0812">Transmembrane</keyword>
<keyword id="KW-1133">Transmembrane helix</keyword>
<organism>
    <name type="scientific">Macaca mulatta</name>
    <name type="common">Rhesus macaque</name>
    <dbReference type="NCBI Taxonomy" id="9544"/>
    <lineage>
        <taxon>Eukaryota</taxon>
        <taxon>Metazoa</taxon>
        <taxon>Chordata</taxon>
        <taxon>Craniata</taxon>
        <taxon>Vertebrata</taxon>
        <taxon>Euteleostomi</taxon>
        <taxon>Mammalia</taxon>
        <taxon>Eutheria</taxon>
        <taxon>Euarchontoglires</taxon>
        <taxon>Primates</taxon>
        <taxon>Haplorrhini</taxon>
        <taxon>Catarrhini</taxon>
        <taxon>Cercopithecidae</taxon>
        <taxon>Cercopithecinae</taxon>
        <taxon>Macaca</taxon>
    </lineage>
</organism>
<feature type="signal peptide">
    <location>
        <begin position="1"/>
        <end position="25"/>
    </location>
</feature>
<feature type="chain" id="PRO_0000014624" description="T-cell surface glycoprotein CD4">
    <location>
        <begin position="26"/>
        <end position="458"/>
    </location>
</feature>
<feature type="topological domain" description="Extracellular" evidence="3">
    <location>
        <begin position="26"/>
        <end position="396"/>
    </location>
</feature>
<feature type="transmembrane region" description="Helical" evidence="3">
    <location>
        <begin position="397"/>
        <end position="418"/>
    </location>
</feature>
<feature type="topological domain" description="Cytoplasmic" evidence="3">
    <location>
        <begin position="419"/>
        <end position="458"/>
    </location>
</feature>
<feature type="domain" description="Ig-like V-type">
    <location>
        <begin position="26"/>
        <end position="125"/>
    </location>
</feature>
<feature type="domain" description="Ig-like C2-type 1">
    <location>
        <begin position="126"/>
        <end position="203"/>
    </location>
</feature>
<feature type="domain" description="Ig-like C2-type 2">
    <location>
        <begin position="204"/>
        <end position="317"/>
    </location>
</feature>
<feature type="domain" description="Ig-like C2-type 3">
    <location>
        <begin position="318"/>
        <end position="374"/>
    </location>
</feature>
<feature type="modified residue" description="Phosphoserine" evidence="2">
    <location>
        <position position="433"/>
    </location>
</feature>
<feature type="modified residue" description="Phosphoserine" evidence="2">
    <location>
        <position position="440"/>
    </location>
</feature>
<feature type="modified residue" description="Phosphoserine" evidence="2">
    <location>
        <position position="456"/>
    </location>
</feature>
<feature type="lipid moiety-binding region" description="S-palmitoyl cysteine" evidence="1">
    <location>
        <position position="419"/>
    </location>
</feature>
<feature type="lipid moiety-binding region" description="S-palmitoyl cysteine" evidence="1">
    <location>
        <position position="422"/>
    </location>
</feature>
<feature type="glycosylation site" description="N-linked (GlcNAc...) asparagine" evidence="1">
    <location>
        <position position="296"/>
    </location>
</feature>
<feature type="glycosylation site" description="N-linked (GlcNAc...) asparagine" evidence="1">
    <location>
        <position position="325"/>
    </location>
</feature>
<feature type="disulfide bond" evidence="4">
    <location>
        <begin position="41"/>
        <end position="109"/>
    </location>
</feature>
<feature type="disulfide bond" evidence="4">
    <location>
        <begin position="155"/>
        <end position="184"/>
    </location>
</feature>
<feature type="disulfide bond" evidence="4">
    <location>
        <begin position="328"/>
        <end position="370"/>
    </location>
</feature>
<feature type="sequence conflict" description="In Ref. 1; AAA36838." evidence="5" ref="1">
    <original>N</original>
    <variation>T</variation>
    <location>
        <position position="42"/>
    </location>
</feature>
<feature type="sequence conflict" description="In Ref. 3." evidence="5" ref="3">
    <original>L</original>
    <variation>S</variation>
    <location>
        <position position="62"/>
    </location>
</feature>
<feature type="sequence conflict" description="In Ref. 2; BAA09671 and 3; CAA51752." evidence="5" ref="2 3">
    <original>L</original>
    <variation>S</variation>
    <location>
        <position position="67"/>
    </location>
</feature>
<feature type="sequence conflict" description="In Ref. 2; BAA09671 and 4; AAC25129." evidence="5" ref="2 4">
    <original>I</original>
    <variation>L</variation>
    <location>
        <position position="169"/>
    </location>
</feature>
<feature type="sequence conflict" description="In Ref. 3; CAA51752." evidence="5" ref="3">
    <original>K</original>
    <variation>N</variation>
    <location>
        <position position="191"/>
    </location>
</feature>
<feature type="sequence conflict" description="In Ref. 2; BAA09671." evidence="5" ref="2">
    <original>S</original>
    <variation>P</variation>
    <location>
        <position position="248"/>
    </location>
</feature>
<feature type="sequence conflict" description="In Ref. 3; CAA51752." evidence="5" ref="3">
    <original>R</original>
    <variation>Q</variation>
    <location>
        <position position="265"/>
    </location>
</feature>
<feature type="sequence conflict" description="In Ref. 2; BAA09671." evidence="5" ref="2">
    <original>A</original>
    <variation>T</variation>
    <location>
        <position position="349"/>
    </location>
</feature>
<feature type="strand" evidence="6">
    <location>
        <begin position="27"/>
        <end position="32"/>
    </location>
</feature>
<feature type="strand" evidence="6">
    <location>
        <begin position="37"/>
        <end position="39"/>
    </location>
</feature>
<feature type="strand" evidence="6">
    <location>
        <begin position="45"/>
        <end position="48"/>
    </location>
</feature>
<feature type="strand" evidence="6">
    <location>
        <begin position="52"/>
        <end position="54"/>
    </location>
</feature>
<feature type="strand" evidence="6">
    <location>
        <begin position="60"/>
        <end position="65"/>
    </location>
</feature>
<feature type="strand" evidence="6">
    <location>
        <begin position="68"/>
        <end position="71"/>
    </location>
</feature>
<feature type="helix" evidence="6">
    <location>
        <begin position="75"/>
        <end position="79"/>
    </location>
</feature>
<feature type="helix" evidence="6">
    <location>
        <begin position="84"/>
        <end position="86"/>
    </location>
</feature>
<feature type="turn" evidence="6">
    <location>
        <begin position="87"/>
        <end position="90"/>
    </location>
</feature>
<feature type="strand" evidence="6">
    <location>
        <begin position="94"/>
        <end position="96"/>
    </location>
</feature>
<feature type="helix" evidence="6">
    <location>
        <begin position="101"/>
        <end position="103"/>
    </location>
</feature>
<feature type="strand" evidence="6">
    <location>
        <begin position="105"/>
        <end position="111"/>
    </location>
</feature>
<feature type="strand" evidence="6">
    <location>
        <begin position="114"/>
        <end position="125"/>
    </location>
</feature>
<feature type="strand" evidence="6">
    <location>
        <begin position="139"/>
        <end position="144"/>
    </location>
</feature>
<feature type="strand" evidence="6">
    <location>
        <begin position="152"/>
        <end position="156"/>
    </location>
</feature>
<feature type="strand" evidence="6">
    <location>
        <begin position="162"/>
        <end position="173"/>
    </location>
</feature>
<feature type="strand" evidence="6">
    <location>
        <begin position="180"/>
        <end position="188"/>
    </location>
</feature>
<feature type="strand" evidence="6">
    <location>
        <begin position="191"/>
        <end position="199"/>
    </location>
</feature>
<dbReference type="EMBL" id="M31134">
    <property type="protein sequence ID" value="AAA36838.1"/>
    <property type="molecule type" value="mRNA"/>
</dbReference>
<dbReference type="EMBL" id="D63347">
    <property type="protein sequence ID" value="BAA09671.1"/>
    <property type="molecule type" value="mRNA"/>
</dbReference>
<dbReference type="EMBL" id="X73326">
    <property type="protein sequence ID" value="CAA51752.1"/>
    <property type="molecule type" value="mRNA"/>
</dbReference>
<dbReference type="EMBL" id="AF057385">
    <property type="protein sequence ID" value="AAC25129.1"/>
    <property type="molecule type" value="Genomic_DNA"/>
</dbReference>
<dbReference type="PIR" id="C32722">
    <property type="entry name" value="RWMQT4"/>
</dbReference>
<dbReference type="RefSeq" id="NP_001036127.1">
    <property type="nucleotide sequence ID" value="NM_001042662.1"/>
</dbReference>
<dbReference type="PDB" id="6TYB">
    <property type="method" value="X-ray"/>
    <property type="resolution" value="2.30 A"/>
    <property type="chains" value="C=26-203"/>
</dbReference>
<dbReference type="PDBsum" id="6TYB"/>
<dbReference type="SMR" id="P16003"/>
<dbReference type="FunCoup" id="P16003">
    <property type="interactions" value="665"/>
</dbReference>
<dbReference type="STRING" id="9544.ENSMMUP00000069370"/>
<dbReference type="GlyCosmos" id="P16003">
    <property type="glycosylation" value="2 sites, No reported glycans"/>
</dbReference>
<dbReference type="PaxDb" id="9544-ENSMMUP00000017342"/>
<dbReference type="ABCD" id="P16003">
    <property type="antibodies" value="5 sequenced antibodies"/>
</dbReference>
<dbReference type="GeneID" id="713807"/>
<dbReference type="KEGG" id="mcc:713807"/>
<dbReference type="CTD" id="920"/>
<dbReference type="eggNOG" id="ENOG502S0W5">
    <property type="taxonomic scope" value="Eukaryota"/>
</dbReference>
<dbReference type="InParanoid" id="P16003"/>
<dbReference type="OrthoDB" id="8657369at2759"/>
<dbReference type="Proteomes" id="UP000006718">
    <property type="component" value="Unassembled WGS sequence"/>
</dbReference>
<dbReference type="GO" id="GO:0009986">
    <property type="term" value="C:cell surface"/>
    <property type="evidence" value="ECO:0007669"/>
    <property type="project" value="UniProtKB-ARBA"/>
</dbReference>
<dbReference type="GO" id="GO:0005886">
    <property type="term" value="C:plasma membrane"/>
    <property type="evidence" value="ECO:0007669"/>
    <property type="project" value="UniProtKB-SubCell"/>
</dbReference>
<dbReference type="GO" id="GO:0015026">
    <property type="term" value="F:coreceptor activity"/>
    <property type="evidence" value="ECO:0007669"/>
    <property type="project" value="InterPro"/>
</dbReference>
<dbReference type="GO" id="GO:0023026">
    <property type="term" value="F:MHC class II protein complex binding"/>
    <property type="evidence" value="ECO:0000250"/>
    <property type="project" value="UniProtKB"/>
</dbReference>
<dbReference type="GO" id="GO:0002250">
    <property type="term" value="P:adaptive immune response"/>
    <property type="evidence" value="ECO:0007669"/>
    <property type="project" value="UniProtKB-KW"/>
</dbReference>
<dbReference type="GO" id="GO:0007155">
    <property type="term" value="P:cell adhesion"/>
    <property type="evidence" value="ECO:0007669"/>
    <property type="project" value="InterPro"/>
</dbReference>
<dbReference type="GO" id="GO:0030217">
    <property type="term" value="P:T cell differentiation"/>
    <property type="evidence" value="ECO:0000250"/>
    <property type="project" value="UniProtKB"/>
</dbReference>
<dbReference type="GO" id="GO:0045058">
    <property type="term" value="P:T cell selection"/>
    <property type="evidence" value="ECO:0000250"/>
    <property type="project" value="UniProtKB"/>
</dbReference>
<dbReference type="CDD" id="cd22570">
    <property type="entry name" value="CD4_CD"/>
    <property type="match status" value="1"/>
</dbReference>
<dbReference type="CDD" id="cd07695">
    <property type="entry name" value="IgV_3_CD4"/>
    <property type="match status" value="1"/>
</dbReference>
<dbReference type="FunFam" id="1.20.5.900:FF:000001">
    <property type="entry name" value="T-cell surface glycoprotein CD4"/>
    <property type="match status" value="1"/>
</dbReference>
<dbReference type="FunFam" id="2.60.40.10:FF:001105">
    <property type="entry name" value="T-cell surface glycoprotein CD4"/>
    <property type="match status" value="1"/>
</dbReference>
<dbReference type="FunFam" id="2.60.40.10:FF:001204">
    <property type="entry name" value="T-cell surface glycoprotein CD4"/>
    <property type="match status" value="1"/>
</dbReference>
<dbReference type="FunFam" id="2.60.40.10:FF:001221">
    <property type="entry name" value="T-cell surface glycoprotein CD4"/>
    <property type="match status" value="1"/>
</dbReference>
<dbReference type="FunFam" id="2.60.40.10:FF:001253">
    <property type="entry name" value="T-cell surface glycoprotein CD4"/>
    <property type="match status" value="1"/>
</dbReference>
<dbReference type="Gene3D" id="2.60.40.10">
    <property type="entry name" value="Immunoglobulins"/>
    <property type="match status" value="4"/>
</dbReference>
<dbReference type="Gene3D" id="1.20.5.900">
    <property type="entry name" value="transmembrane domain of human cd4"/>
    <property type="match status" value="1"/>
</dbReference>
<dbReference type="InterPro" id="IPR000973">
    <property type="entry name" value="CD4"/>
</dbReference>
<dbReference type="InterPro" id="IPR015274">
    <property type="entry name" value="CD4-extracel"/>
</dbReference>
<dbReference type="InterPro" id="IPR007110">
    <property type="entry name" value="Ig-like_dom"/>
</dbReference>
<dbReference type="InterPro" id="IPR036179">
    <property type="entry name" value="Ig-like_dom_sf"/>
</dbReference>
<dbReference type="InterPro" id="IPR013783">
    <property type="entry name" value="Ig-like_fold"/>
</dbReference>
<dbReference type="InterPro" id="IPR008424">
    <property type="entry name" value="Ig_C2-set"/>
</dbReference>
<dbReference type="InterPro" id="IPR003599">
    <property type="entry name" value="Ig_sub"/>
</dbReference>
<dbReference type="InterPro" id="IPR013106">
    <property type="entry name" value="Ig_V-set"/>
</dbReference>
<dbReference type="InterPro" id="IPR013151">
    <property type="entry name" value="Immunoglobulin_dom"/>
</dbReference>
<dbReference type="InterPro" id="IPR021963">
    <property type="entry name" value="Tcell_CD4_Cterm"/>
</dbReference>
<dbReference type="PANTHER" id="PTHR11422">
    <property type="entry name" value="T-CELL SURFACE GLYCOPROTEIN CD4"/>
    <property type="match status" value="1"/>
</dbReference>
<dbReference type="PANTHER" id="PTHR11422:SF0">
    <property type="entry name" value="T-CELL SURFACE GLYCOPROTEIN CD4"/>
    <property type="match status" value="1"/>
</dbReference>
<dbReference type="Pfam" id="PF05790">
    <property type="entry name" value="C2-set"/>
    <property type="match status" value="2"/>
</dbReference>
<dbReference type="Pfam" id="PF09191">
    <property type="entry name" value="CD4-extracel"/>
    <property type="match status" value="1"/>
</dbReference>
<dbReference type="Pfam" id="PF00047">
    <property type="entry name" value="ig"/>
    <property type="match status" value="1"/>
</dbReference>
<dbReference type="Pfam" id="PF12104">
    <property type="entry name" value="Tcell_CD4_C"/>
    <property type="match status" value="1"/>
</dbReference>
<dbReference type="PRINTS" id="PR00692">
    <property type="entry name" value="CD4TCANTIGEN"/>
</dbReference>
<dbReference type="SMART" id="SM00409">
    <property type="entry name" value="IG"/>
    <property type="match status" value="3"/>
</dbReference>
<dbReference type="SMART" id="SM00406">
    <property type="entry name" value="IGv"/>
    <property type="match status" value="1"/>
</dbReference>
<dbReference type="SUPFAM" id="SSF48726">
    <property type="entry name" value="Immunoglobulin"/>
    <property type="match status" value="4"/>
</dbReference>
<dbReference type="PROSITE" id="PS50835">
    <property type="entry name" value="IG_LIKE"/>
    <property type="match status" value="1"/>
</dbReference>
<accession>P16003</accession>
<accession>Q29617</accession>
<name>CD4_MACMU</name>
<gene>
    <name type="primary">CD4</name>
</gene>
<protein>
    <recommendedName>
        <fullName>T-cell surface glycoprotein CD4</fullName>
    </recommendedName>
    <alternativeName>
        <fullName>T-cell surface antigen T4/Leu-3</fullName>
    </alternativeName>
    <cdAntigenName>CD4</cdAntigenName>
</protein>